<proteinExistence type="inferred from homology"/>
<protein>
    <recommendedName>
        <fullName evidence="2">Cytochrome b6-f complex subunit 4</fullName>
    </recommendedName>
    <alternativeName>
        <fullName evidence="2">17 kDa polypeptide</fullName>
    </alternativeName>
</protein>
<keyword id="KW-0150">Chloroplast</keyword>
<keyword id="KW-0249">Electron transport</keyword>
<keyword id="KW-0472">Membrane</keyword>
<keyword id="KW-0602">Photosynthesis</keyword>
<keyword id="KW-0934">Plastid</keyword>
<keyword id="KW-0793">Thylakoid</keyword>
<keyword id="KW-0812">Transmembrane</keyword>
<keyword id="KW-1133">Transmembrane helix</keyword>
<keyword id="KW-0813">Transport</keyword>
<reference key="1">
    <citation type="journal article" date="1995" name="Plant Mol. Biol. Rep.">
        <title>Complete nucleotide sequence of the Porphyra purpurea chloroplast genome.</title>
        <authorList>
            <person name="Reith M.E."/>
            <person name="Munholland J."/>
        </authorList>
    </citation>
    <scope>NUCLEOTIDE SEQUENCE [LARGE SCALE GENOMIC DNA]</scope>
    <source>
        <strain>Avonport</strain>
    </source>
</reference>
<dbReference type="EMBL" id="U38804">
    <property type="protein sequence ID" value="AAC08226.1"/>
    <property type="molecule type" value="Genomic_DNA"/>
</dbReference>
<dbReference type="PIR" id="S73261">
    <property type="entry name" value="S73261"/>
</dbReference>
<dbReference type="RefSeq" id="NP_053950.1">
    <property type="nucleotide sequence ID" value="NC_000925.1"/>
</dbReference>
<dbReference type="SMR" id="P51340"/>
<dbReference type="GeneID" id="809976"/>
<dbReference type="GO" id="GO:0009535">
    <property type="term" value="C:chloroplast thylakoid membrane"/>
    <property type="evidence" value="ECO:0007669"/>
    <property type="project" value="UniProtKB-SubCell"/>
</dbReference>
<dbReference type="GO" id="GO:0045158">
    <property type="term" value="F:electron transporter, transferring electrons within cytochrome b6/f complex of photosystem II activity"/>
    <property type="evidence" value="ECO:0007669"/>
    <property type="project" value="UniProtKB-UniRule"/>
</dbReference>
<dbReference type="GO" id="GO:0045156">
    <property type="term" value="F:electron transporter, transferring electrons within the cyclic electron transport pathway of photosynthesis activity"/>
    <property type="evidence" value="ECO:0007669"/>
    <property type="project" value="InterPro"/>
</dbReference>
<dbReference type="GO" id="GO:0016491">
    <property type="term" value="F:oxidoreductase activity"/>
    <property type="evidence" value="ECO:0007669"/>
    <property type="project" value="InterPro"/>
</dbReference>
<dbReference type="GO" id="GO:0009767">
    <property type="term" value="P:photosynthetic electron transport chain"/>
    <property type="evidence" value="ECO:0007669"/>
    <property type="project" value="InterPro"/>
</dbReference>
<dbReference type="CDD" id="cd00290">
    <property type="entry name" value="cytochrome_b_C"/>
    <property type="match status" value="1"/>
</dbReference>
<dbReference type="FunFam" id="1.10.287.980:FF:000001">
    <property type="entry name" value="Cytochrome b6-f complex subunit 4"/>
    <property type="match status" value="1"/>
</dbReference>
<dbReference type="FunFam" id="1.20.5.510:FF:000002">
    <property type="entry name" value="Cytochrome b6-f complex subunit 4"/>
    <property type="match status" value="1"/>
</dbReference>
<dbReference type="Gene3D" id="1.10.287.980">
    <property type="entry name" value="plastocyanin oxidoreductase"/>
    <property type="match status" value="1"/>
</dbReference>
<dbReference type="Gene3D" id="1.20.5.510">
    <property type="entry name" value="Single helix bin"/>
    <property type="match status" value="1"/>
</dbReference>
<dbReference type="HAMAP" id="MF_01344">
    <property type="entry name" value="Cytb6_f_subIV"/>
    <property type="match status" value="1"/>
</dbReference>
<dbReference type="InterPro" id="IPR005798">
    <property type="entry name" value="Cyt_b/b6_C"/>
</dbReference>
<dbReference type="InterPro" id="IPR036150">
    <property type="entry name" value="Cyt_b/b6_C_sf"/>
</dbReference>
<dbReference type="InterPro" id="IPR005870">
    <property type="entry name" value="Cyt_b6/f_cplx_suIV"/>
</dbReference>
<dbReference type="InterPro" id="IPR048260">
    <property type="entry name" value="Cytochrome_b_C_euk/bac"/>
</dbReference>
<dbReference type="NCBIfam" id="TIGR01156">
    <property type="entry name" value="cytb6_f_IV"/>
    <property type="match status" value="1"/>
</dbReference>
<dbReference type="PANTHER" id="PTHR19271">
    <property type="entry name" value="CYTOCHROME B"/>
    <property type="match status" value="1"/>
</dbReference>
<dbReference type="PANTHER" id="PTHR19271:SF16">
    <property type="entry name" value="CYTOCHROME B"/>
    <property type="match status" value="1"/>
</dbReference>
<dbReference type="Pfam" id="PF00032">
    <property type="entry name" value="Cytochrom_B_C"/>
    <property type="match status" value="1"/>
</dbReference>
<dbReference type="PIRSF" id="PIRSF000033">
    <property type="entry name" value="B6f_17K"/>
    <property type="match status" value="1"/>
</dbReference>
<dbReference type="SUPFAM" id="SSF81648">
    <property type="entry name" value="a domain/subunit of cytochrome bc1 complex (Ubiquinol-cytochrome c reductase)"/>
    <property type="match status" value="1"/>
</dbReference>
<dbReference type="PROSITE" id="PS51003">
    <property type="entry name" value="CYTB_CTER"/>
    <property type="match status" value="1"/>
</dbReference>
<evidence type="ECO:0000250" key="1"/>
<evidence type="ECO:0000255" key="2">
    <source>
        <dbReference type="HAMAP-Rule" id="MF_01344"/>
    </source>
</evidence>
<geneLocation type="chloroplast"/>
<organism>
    <name type="scientific">Porphyra purpurea</name>
    <name type="common">Red seaweed</name>
    <name type="synonym">Ulva purpurea</name>
    <dbReference type="NCBI Taxonomy" id="2787"/>
    <lineage>
        <taxon>Eukaryota</taxon>
        <taxon>Rhodophyta</taxon>
        <taxon>Bangiophyceae</taxon>
        <taxon>Bangiales</taxon>
        <taxon>Bangiaceae</taxon>
        <taxon>Porphyra</taxon>
    </lineage>
</organism>
<accession>P51340</accession>
<sequence>MSILKKPDLTDPKLRAKLAKGMGHNYYGEPAWPNDLLYVFPVVILGTIACSIGLAILEPSSLGEKSNPFATPLEILPEWYFFPTFNLLRVIPNKLLGVLSMAAVPAGLLTVPFIENVNKFQNPFRRPIATTIFLISTVITIWLGIGATMPINNAITLGLF</sequence>
<name>PETD_PORPU</name>
<feature type="chain" id="PRO_0000061885" description="Cytochrome b6-f complex subunit 4">
    <location>
        <begin position="1"/>
        <end position="160"/>
    </location>
</feature>
<feature type="transmembrane region" description="Helical" evidence="2">
    <location>
        <begin position="36"/>
        <end position="56"/>
    </location>
</feature>
<feature type="transmembrane region" description="Helical" evidence="2">
    <location>
        <begin position="95"/>
        <end position="115"/>
    </location>
</feature>
<feature type="transmembrane region" description="Helical" evidence="2">
    <location>
        <begin position="131"/>
        <end position="151"/>
    </location>
</feature>
<comment type="function">
    <text evidence="2">Component of the cytochrome b6-f complex, which mediates electron transfer between photosystem II (PSII) and photosystem I (PSI), cyclic electron flow around PSI, and state transitions.</text>
</comment>
<comment type="subunit">
    <text evidence="1">The 4 large subunits of the cytochrome b6-f complex are cytochrome b6, subunit IV (17 kDa polypeptide, petD), cytochrome f and the Rieske protein, while the 4 small subunits are petG, petL, petM and petN. The complex functions as a dimer (By similarity).</text>
</comment>
<comment type="subcellular location">
    <subcellularLocation>
        <location evidence="2">Plastid</location>
        <location evidence="2">Chloroplast thylakoid membrane</location>
        <topology evidence="2">Multi-pass membrane protein</topology>
    </subcellularLocation>
</comment>
<comment type="similarity">
    <text evidence="2">Belongs to the cytochrome b family. PetD subfamily.</text>
</comment>
<gene>
    <name evidence="2" type="primary">petD</name>
</gene>